<organism>
    <name type="scientific">Methanococcoides burtonii (strain DSM 6242 / NBRC 107633 / OCM 468 / ACE-M)</name>
    <dbReference type="NCBI Taxonomy" id="259564"/>
    <lineage>
        <taxon>Archaea</taxon>
        <taxon>Methanobacteriati</taxon>
        <taxon>Methanobacteriota</taxon>
        <taxon>Stenosarchaea group</taxon>
        <taxon>Methanomicrobia</taxon>
        <taxon>Methanosarcinales</taxon>
        <taxon>Methanosarcinaceae</taxon>
        <taxon>Methanococcoides</taxon>
    </lineage>
</organism>
<reference key="1">
    <citation type="journal article" date="2009" name="ISME J.">
        <title>The genome sequence of the psychrophilic archaeon, Methanococcoides burtonii: the role of genome evolution in cold adaptation.</title>
        <authorList>
            <person name="Allen M.A."/>
            <person name="Lauro F.M."/>
            <person name="Williams T.J."/>
            <person name="Burg D."/>
            <person name="Siddiqui K.S."/>
            <person name="De Francisci D."/>
            <person name="Chong K.W."/>
            <person name="Pilak O."/>
            <person name="Chew H.H."/>
            <person name="De Maere M.Z."/>
            <person name="Ting L."/>
            <person name="Katrib M."/>
            <person name="Ng C."/>
            <person name="Sowers K.R."/>
            <person name="Galperin M.Y."/>
            <person name="Anderson I.J."/>
            <person name="Ivanova N."/>
            <person name="Dalin E."/>
            <person name="Martinez M."/>
            <person name="Lapidus A."/>
            <person name="Hauser L."/>
            <person name="Land M."/>
            <person name="Thomas T."/>
            <person name="Cavicchioli R."/>
        </authorList>
    </citation>
    <scope>NUCLEOTIDE SEQUENCE [LARGE SCALE GENOMIC DNA]</scope>
    <source>
        <strain>DSM 6242 / NBRC 107633 / OCM 468 / ACE-M</strain>
    </source>
</reference>
<protein>
    <recommendedName>
        <fullName evidence="1">UvrABC system protein C</fullName>
        <shortName evidence="1">Protein UvrC</shortName>
    </recommendedName>
    <alternativeName>
        <fullName evidence="1">Excinuclease ABC subunit C</fullName>
    </alternativeName>
</protein>
<dbReference type="EMBL" id="CP000300">
    <property type="protein sequence ID" value="ABE52374.1"/>
    <property type="molecule type" value="Genomic_DNA"/>
</dbReference>
<dbReference type="RefSeq" id="WP_011499518.1">
    <property type="nucleotide sequence ID" value="NC_007955.1"/>
</dbReference>
<dbReference type="SMR" id="Q12W02"/>
<dbReference type="STRING" id="259564.Mbur_1467"/>
<dbReference type="GeneID" id="3998496"/>
<dbReference type="KEGG" id="mbu:Mbur_1467"/>
<dbReference type="HOGENOM" id="CLU_014841_3_2_2"/>
<dbReference type="OrthoDB" id="121419at2157"/>
<dbReference type="Proteomes" id="UP000001979">
    <property type="component" value="Chromosome"/>
</dbReference>
<dbReference type="GO" id="GO:0005737">
    <property type="term" value="C:cytoplasm"/>
    <property type="evidence" value="ECO:0007669"/>
    <property type="project" value="UniProtKB-SubCell"/>
</dbReference>
<dbReference type="GO" id="GO:0009380">
    <property type="term" value="C:excinuclease repair complex"/>
    <property type="evidence" value="ECO:0007669"/>
    <property type="project" value="InterPro"/>
</dbReference>
<dbReference type="GO" id="GO:0003677">
    <property type="term" value="F:DNA binding"/>
    <property type="evidence" value="ECO:0007669"/>
    <property type="project" value="UniProtKB-UniRule"/>
</dbReference>
<dbReference type="GO" id="GO:0009381">
    <property type="term" value="F:excinuclease ABC activity"/>
    <property type="evidence" value="ECO:0007669"/>
    <property type="project" value="UniProtKB-UniRule"/>
</dbReference>
<dbReference type="GO" id="GO:0006289">
    <property type="term" value="P:nucleotide-excision repair"/>
    <property type="evidence" value="ECO:0007669"/>
    <property type="project" value="UniProtKB-UniRule"/>
</dbReference>
<dbReference type="GO" id="GO:0009432">
    <property type="term" value="P:SOS response"/>
    <property type="evidence" value="ECO:0007669"/>
    <property type="project" value="UniProtKB-UniRule"/>
</dbReference>
<dbReference type="CDD" id="cd10434">
    <property type="entry name" value="GIY-YIG_UvrC_Cho"/>
    <property type="match status" value="1"/>
</dbReference>
<dbReference type="FunFam" id="3.40.1440.10:FF:000001">
    <property type="entry name" value="UvrABC system protein C"/>
    <property type="match status" value="1"/>
</dbReference>
<dbReference type="Gene3D" id="1.10.150.20">
    <property type="entry name" value="5' to 3' exonuclease, C-terminal subdomain"/>
    <property type="match status" value="1"/>
</dbReference>
<dbReference type="Gene3D" id="3.40.1440.10">
    <property type="entry name" value="GIY-YIG endonuclease"/>
    <property type="match status" value="1"/>
</dbReference>
<dbReference type="Gene3D" id="4.10.860.10">
    <property type="entry name" value="UVR domain"/>
    <property type="match status" value="1"/>
</dbReference>
<dbReference type="Gene3D" id="3.30.420.340">
    <property type="entry name" value="UvrC, RNAse H endonuclease domain"/>
    <property type="match status" value="1"/>
</dbReference>
<dbReference type="HAMAP" id="MF_00203">
    <property type="entry name" value="UvrC"/>
    <property type="match status" value="1"/>
</dbReference>
<dbReference type="InterPro" id="IPR000305">
    <property type="entry name" value="GIY-YIG_endonuc"/>
</dbReference>
<dbReference type="InterPro" id="IPR035901">
    <property type="entry name" value="GIY-YIG_endonuc_sf"/>
</dbReference>
<dbReference type="InterPro" id="IPR047296">
    <property type="entry name" value="GIY-YIG_UvrC_Cho"/>
</dbReference>
<dbReference type="InterPro" id="IPR003583">
    <property type="entry name" value="Hlx-hairpin-Hlx_DNA-bd_motif"/>
</dbReference>
<dbReference type="InterPro" id="IPR010994">
    <property type="entry name" value="RuvA_2-like"/>
</dbReference>
<dbReference type="InterPro" id="IPR001943">
    <property type="entry name" value="UVR_dom"/>
</dbReference>
<dbReference type="InterPro" id="IPR036876">
    <property type="entry name" value="UVR_dom_sf"/>
</dbReference>
<dbReference type="InterPro" id="IPR050066">
    <property type="entry name" value="UvrABC_protein_C"/>
</dbReference>
<dbReference type="InterPro" id="IPR004791">
    <property type="entry name" value="UvrC"/>
</dbReference>
<dbReference type="InterPro" id="IPR001162">
    <property type="entry name" value="UvrC_RNase_H_dom"/>
</dbReference>
<dbReference type="InterPro" id="IPR038476">
    <property type="entry name" value="UvrC_RNase_H_dom_sf"/>
</dbReference>
<dbReference type="NCBIfam" id="NF001824">
    <property type="entry name" value="PRK00558.1-5"/>
    <property type="match status" value="1"/>
</dbReference>
<dbReference type="NCBIfam" id="TIGR00194">
    <property type="entry name" value="uvrC"/>
    <property type="match status" value="1"/>
</dbReference>
<dbReference type="PANTHER" id="PTHR30562:SF1">
    <property type="entry name" value="UVRABC SYSTEM PROTEIN C"/>
    <property type="match status" value="1"/>
</dbReference>
<dbReference type="PANTHER" id="PTHR30562">
    <property type="entry name" value="UVRC/OXIDOREDUCTASE"/>
    <property type="match status" value="1"/>
</dbReference>
<dbReference type="Pfam" id="PF01541">
    <property type="entry name" value="GIY-YIG"/>
    <property type="match status" value="1"/>
</dbReference>
<dbReference type="Pfam" id="PF14520">
    <property type="entry name" value="HHH_5"/>
    <property type="match status" value="1"/>
</dbReference>
<dbReference type="Pfam" id="PF02151">
    <property type="entry name" value="UVR"/>
    <property type="match status" value="1"/>
</dbReference>
<dbReference type="Pfam" id="PF22920">
    <property type="entry name" value="UvrC_RNaseH"/>
    <property type="match status" value="1"/>
</dbReference>
<dbReference type="Pfam" id="PF08459">
    <property type="entry name" value="UvrC_RNaseH_dom"/>
    <property type="match status" value="1"/>
</dbReference>
<dbReference type="SMART" id="SM00465">
    <property type="entry name" value="GIYc"/>
    <property type="match status" value="1"/>
</dbReference>
<dbReference type="SMART" id="SM00278">
    <property type="entry name" value="HhH1"/>
    <property type="match status" value="2"/>
</dbReference>
<dbReference type="SUPFAM" id="SSF46600">
    <property type="entry name" value="C-terminal UvrC-binding domain of UvrB"/>
    <property type="match status" value="1"/>
</dbReference>
<dbReference type="SUPFAM" id="SSF82771">
    <property type="entry name" value="GIY-YIG endonuclease"/>
    <property type="match status" value="1"/>
</dbReference>
<dbReference type="SUPFAM" id="SSF47781">
    <property type="entry name" value="RuvA domain 2-like"/>
    <property type="match status" value="1"/>
</dbReference>
<dbReference type="PROSITE" id="PS50164">
    <property type="entry name" value="GIY_YIG"/>
    <property type="match status" value="1"/>
</dbReference>
<dbReference type="PROSITE" id="PS50151">
    <property type="entry name" value="UVR"/>
    <property type="match status" value="1"/>
</dbReference>
<dbReference type="PROSITE" id="PS50165">
    <property type="entry name" value="UVRC"/>
    <property type="match status" value="1"/>
</dbReference>
<keyword id="KW-0963">Cytoplasm</keyword>
<keyword id="KW-0227">DNA damage</keyword>
<keyword id="KW-0228">DNA excision</keyword>
<keyword id="KW-0234">DNA repair</keyword>
<keyword id="KW-0267">Excision nuclease</keyword>
<keyword id="KW-0742">SOS response</keyword>
<feature type="chain" id="PRO_0000264983" description="UvrABC system protein C">
    <location>
        <begin position="1"/>
        <end position="604"/>
    </location>
</feature>
<feature type="domain" description="GIY-YIG" evidence="1">
    <location>
        <begin position="10"/>
        <end position="89"/>
    </location>
</feature>
<feature type="domain" description="UVR" evidence="1">
    <location>
        <begin position="199"/>
        <end position="234"/>
    </location>
</feature>
<accession>Q12W02</accession>
<sequence length="604" mass="68213">MRPDISNIPELPGVYLMKDISDNIIYIGKAKSLKKRVSQYFQSSKNHSSKTRAMVRKIADVDYIVTESEVAALILEANLVKKNRPHYNIDLKDDKRYPYVKVTVNTKFPKIFITRRRLMDGALYFGPYTNVKPVRQTLDMISQIFRIKRCNRRVDGKGKRACLNYHIDRCYAPCNGSITPEEYRNNVMEAVKLFKGETSGTIKELQEKMNIHAIAQEYESAAVIRDQIDALKSLSRQQTATAGNDDSDIIATASDDETVFVQIFYIRDGNMVGKADMSLSWGDATGNIARVTEEFIKQYYQDAPVPPEILVQYPIPEKELVIKWLSEKAARSVQIQVPQRGNKKRLMEMAEQNAQMTLEQSHLKQSDKEQALQALLQLRDALALSTLPAHIEGFDISNISGTDAVGSMVVFENGLPANSKYRHFNIKTVKGIDDFAMMAEVVKRRYTHQKAEKDKLPDLILIDGGPGQVSAAMGSLKELQLDIPLVGLAKRFEHIIVPKDGTDEVVILPHTSEALKVLMRVRDESHRFAVSSHRRRRTARLSHSELDTIPGIGASRKKALLNHFSSIEQIRHASVEELTAVEGISKGLAERIVAHFNKERVENQ</sequence>
<evidence type="ECO:0000255" key="1">
    <source>
        <dbReference type="HAMAP-Rule" id="MF_00203"/>
    </source>
</evidence>
<gene>
    <name evidence="1" type="primary">uvrC</name>
    <name type="ordered locus">Mbur_1467</name>
</gene>
<comment type="function">
    <text evidence="1">The UvrABC repair system catalyzes the recognition and processing of DNA lesions. UvrC both incises the 5' and 3' sides of the lesion. The N-terminal half is responsible for the 3' incision and the C-terminal half is responsible for the 5' incision.</text>
</comment>
<comment type="subunit">
    <text evidence="1">Interacts with UvrB in an incision complex.</text>
</comment>
<comment type="subcellular location">
    <subcellularLocation>
        <location evidence="1">Cytoplasm</location>
    </subcellularLocation>
</comment>
<comment type="similarity">
    <text evidence="1">Belongs to the UvrC family.</text>
</comment>
<name>UVRC_METBU</name>
<proteinExistence type="inferred from homology"/>